<accession>Q8NAJ2</accession>
<accession>A2RU00</accession>
<gene>
    <name evidence="2" type="primary">LINC02913</name>
    <name type="synonym">C9orf106</name>
</gene>
<name>CI106_HUMAN</name>
<protein>
    <recommendedName>
        <fullName>Putative uncharacterized protein encoded by LINC02913</fullName>
    </recommendedName>
</protein>
<organism>
    <name type="scientific">Homo sapiens</name>
    <name type="common">Human</name>
    <dbReference type="NCBI Taxonomy" id="9606"/>
    <lineage>
        <taxon>Eukaryota</taxon>
        <taxon>Metazoa</taxon>
        <taxon>Chordata</taxon>
        <taxon>Craniata</taxon>
        <taxon>Vertebrata</taxon>
        <taxon>Euteleostomi</taxon>
        <taxon>Mammalia</taxon>
        <taxon>Eutheria</taxon>
        <taxon>Euarchontoglires</taxon>
        <taxon>Primates</taxon>
        <taxon>Haplorrhini</taxon>
        <taxon>Catarrhini</taxon>
        <taxon>Hominidae</taxon>
        <taxon>Homo</taxon>
    </lineage>
</organism>
<evidence type="ECO:0000305" key="1"/>
<evidence type="ECO:0000312" key="2">
    <source>
        <dbReference type="HGNC" id="HGNC:31370"/>
    </source>
</evidence>
<reference key="1">
    <citation type="journal article" date="2004" name="Nat. Genet.">
        <title>Complete sequencing and characterization of 21,243 full-length human cDNAs.</title>
        <authorList>
            <person name="Ota T."/>
            <person name="Suzuki Y."/>
            <person name="Nishikawa T."/>
            <person name="Otsuki T."/>
            <person name="Sugiyama T."/>
            <person name="Irie R."/>
            <person name="Wakamatsu A."/>
            <person name="Hayashi K."/>
            <person name="Sato H."/>
            <person name="Nagai K."/>
            <person name="Kimura K."/>
            <person name="Makita H."/>
            <person name="Sekine M."/>
            <person name="Obayashi M."/>
            <person name="Nishi T."/>
            <person name="Shibahara T."/>
            <person name="Tanaka T."/>
            <person name="Ishii S."/>
            <person name="Yamamoto J."/>
            <person name="Saito K."/>
            <person name="Kawai Y."/>
            <person name="Isono Y."/>
            <person name="Nakamura Y."/>
            <person name="Nagahari K."/>
            <person name="Murakami K."/>
            <person name="Yasuda T."/>
            <person name="Iwayanagi T."/>
            <person name="Wagatsuma M."/>
            <person name="Shiratori A."/>
            <person name="Sudo H."/>
            <person name="Hosoiri T."/>
            <person name="Kaku Y."/>
            <person name="Kodaira H."/>
            <person name="Kondo H."/>
            <person name="Sugawara M."/>
            <person name="Takahashi M."/>
            <person name="Kanda K."/>
            <person name="Yokoi T."/>
            <person name="Furuya T."/>
            <person name="Kikkawa E."/>
            <person name="Omura Y."/>
            <person name="Abe K."/>
            <person name="Kamihara K."/>
            <person name="Katsuta N."/>
            <person name="Sato K."/>
            <person name="Tanikawa M."/>
            <person name="Yamazaki M."/>
            <person name="Ninomiya K."/>
            <person name="Ishibashi T."/>
            <person name="Yamashita H."/>
            <person name="Murakawa K."/>
            <person name="Fujimori K."/>
            <person name="Tanai H."/>
            <person name="Kimata M."/>
            <person name="Watanabe M."/>
            <person name="Hiraoka S."/>
            <person name="Chiba Y."/>
            <person name="Ishida S."/>
            <person name="Ono Y."/>
            <person name="Takiguchi S."/>
            <person name="Watanabe S."/>
            <person name="Yosida M."/>
            <person name="Hotuta T."/>
            <person name="Kusano J."/>
            <person name="Kanehori K."/>
            <person name="Takahashi-Fujii A."/>
            <person name="Hara H."/>
            <person name="Tanase T.-O."/>
            <person name="Nomura Y."/>
            <person name="Togiya S."/>
            <person name="Komai F."/>
            <person name="Hara R."/>
            <person name="Takeuchi K."/>
            <person name="Arita M."/>
            <person name="Imose N."/>
            <person name="Musashino K."/>
            <person name="Yuuki H."/>
            <person name="Oshima A."/>
            <person name="Sasaki N."/>
            <person name="Aotsuka S."/>
            <person name="Yoshikawa Y."/>
            <person name="Matsunawa H."/>
            <person name="Ichihara T."/>
            <person name="Shiohata N."/>
            <person name="Sano S."/>
            <person name="Moriya S."/>
            <person name="Momiyama H."/>
            <person name="Satoh N."/>
            <person name="Takami S."/>
            <person name="Terashima Y."/>
            <person name="Suzuki O."/>
            <person name="Nakagawa S."/>
            <person name="Senoh A."/>
            <person name="Mizoguchi H."/>
            <person name="Goto Y."/>
            <person name="Shimizu F."/>
            <person name="Wakebe H."/>
            <person name="Hishigaki H."/>
            <person name="Watanabe T."/>
            <person name="Sugiyama A."/>
            <person name="Takemoto M."/>
            <person name="Kawakami B."/>
            <person name="Yamazaki M."/>
            <person name="Watanabe K."/>
            <person name="Kumagai A."/>
            <person name="Itakura S."/>
            <person name="Fukuzumi Y."/>
            <person name="Fujimori Y."/>
            <person name="Komiyama M."/>
            <person name="Tashiro H."/>
            <person name="Tanigami A."/>
            <person name="Fujiwara T."/>
            <person name="Ono T."/>
            <person name="Yamada K."/>
            <person name="Fujii Y."/>
            <person name="Ozaki K."/>
            <person name="Hirao M."/>
            <person name="Ohmori Y."/>
            <person name="Kawabata A."/>
            <person name="Hikiji T."/>
            <person name="Kobatake N."/>
            <person name="Inagaki H."/>
            <person name="Ikema Y."/>
            <person name="Okamoto S."/>
            <person name="Okitani R."/>
            <person name="Kawakami T."/>
            <person name="Noguchi S."/>
            <person name="Itoh T."/>
            <person name="Shigeta K."/>
            <person name="Senba T."/>
            <person name="Matsumura K."/>
            <person name="Nakajima Y."/>
            <person name="Mizuno T."/>
            <person name="Morinaga M."/>
            <person name="Sasaki M."/>
            <person name="Togashi T."/>
            <person name="Oyama M."/>
            <person name="Hata H."/>
            <person name="Watanabe M."/>
            <person name="Komatsu T."/>
            <person name="Mizushima-Sugano J."/>
            <person name="Satoh T."/>
            <person name="Shirai Y."/>
            <person name="Takahashi Y."/>
            <person name="Nakagawa K."/>
            <person name="Okumura K."/>
            <person name="Nagase T."/>
            <person name="Nomura N."/>
            <person name="Kikuchi H."/>
            <person name="Masuho Y."/>
            <person name="Yamashita R."/>
            <person name="Nakai K."/>
            <person name="Yada T."/>
            <person name="Nakamura Y."/>
            <person name="Ohara O."/>
            <person name="Isogai T."/>
            <person name="Sugano S."/>
        </authorList>
    </citation>
    <scope>NUCLEOTIDE SEQUENCE [LARGE SCALE MRNA]</scope>
    <source>
        <tissue>Prostate</tissue>
    </source>
</reference>
<reference key="2">
    <citation type="journal article" date="2004" name="Nature">
        <title>DNA sequence and analysis of human chromosome 9.</title>
        <authorList>
            <person name="Humphray S.J."/>
            <person name="Oliver K."/>
            <person name="Hunt A.R."/>
            <person name="Plumb R.W."/>
            <person name="Loveland J.E."/>
            <person name="Howe K.L."/>
            <person name="Andrews T.D."/>
            <person name="Searle S."/>
            <person name="Hunt S.E."/>
            <person name="Scott C.E."/>
            <person name="Jones M.C."/>
            <person name="Ainscough R."/>
            <person name="Almeida J.P."/>
            <person name="Ambrose K.D."/>
            <person name="Ashwell R.I.S."/>
            <person name="Babbage A.K."/>
            <person name="Babbage S."/>
            <person name="Bagguley C.L."/>
            <person name="Bailey J."/>
            <person name="Banerjee R."/>
            <person name="Barker D.J."/>
            <person name="Barlow K.F."/>
            <person name="Bates K."/>
            <person name="Beasley H."/>
            <person name="Beasley O."/>
            <person name="Bird C.P."/>
            <person name="Bray-Allen S."/>
            <person name="Brown A.J."/>
            <person name="Brown J.Y."/>
            <person name="Burford D."/>
            <person name="Burrill W."/>
            <person name="Burton J."/>
            <person name="Carder C."/>
            <person name="Carter N.P."/>
            <person name="Chapman J.C."/>
            <person name="Chen Y."/>
            <person name="Clarke G."/>
            <person name="Clark S.Y."/>
            <person name="Clee C.M."/>
            <person name="Clegg S."/>
            <person name="Collier R.E."/>
            <person name="Corby N."/>
            <person name="Crosier M."/>
            <person name="Cummings A.T."/>
            <person name="Davies J."/>
            <person name="Dhami P."/>
            <person name="Dunn M."/>
            <person name="Dutta I."/>
            <person name="Dyer L.W."/>
            <person name="Earthrowl M.E."/>
            <person name="Faulkner L."/>
            <person name="Fleming C.J."/>
            <person name="Frankish A."/>
            <person name="Frankland J.A."/>
            <person name="French L."/>
            <person name="Fricker D.G."/>
            <person name="Garner P."/>
            <person name="Garnett J."/>
            <person name="Ghori J."/>
            <person name="Gilbert J.G.R."/>
            <person name="Glison C."/>
            <person name="Grafham D.V."/>
            <person name="Gribble S."/>
            <person name="Griffiths C."/>
            <person name="Griffiths-Jones S."/>
            <person name="Grocock R."/>
            <person name="Guy J."/>
            <person name="Hall R.E."/>
            <person name="Hammond S."/>
            <person name="Harley J.L."/>
            <person name="Harrison E.S.I."/>
            <person name="Hart E.A."/>
            <person name="Heath P.D."/>
            <person name="Henderson C.D."/>
            <person name="Hopkins B.L."/>
            <person name="Howard P.J."/>
            <person name="Howden P.J."/>
            <person name="Huckle E."/>
            <person name="Johnson C."/>
            <person name="Johnson D."/>
            <person name="Joy A.A."/>
            <person name="Kay M."/>
            <person name="Keenan S."/>
            <person name="Kershaw J.K."/>
            <person name="Kimberley A.M."/>
            <person name="King A."/>
            <person name="Knights A."/>
            <person name="Laird G.K."/>
            <person name="Langford C."/>
            <person name="Lawlor S."/>
            <person name="Leongamornlert D.A."/>
            <person name="Leversha M."/>
            <person name="Lloyd C."/>
            <person name="Lloyd D.M."/>
            <person name="Lovell J."/>
            <person name="Martin S."/>
            <person name="Mashreghi-Mohammadi M."/>
            <person name="Matthews L."/>
            <person name="McLaren S."/>
            <person name="McLay K.E."/>
            <person name="McMurray A."/>
            <person name="Milne S."/>
            <person name="Nickerson T."/>
            <person name="Nisbett J."/>
            <person name="Nordsiek G."/>
            <person name="Pearce A.V."/>
            <person name="Peck A.I."/>
            <person name="Porter K.M."/>
            <person name="Pandian R."/>
            <person name="Pelan S."/>
            <person name="Phillimore B."/>
            <person name="Povey S."/>
            <person name="Ramsey Y."/>
            <person name="Rand V."/>
            <person name="Scharfe M."/>
            <person name="Sehra H.K."/>
            <person name="Shownkeen R."/>
            <person name="Sims S.K."/>
            <person name="Skuce C.D."/>
            <person name="Smith M."/>
            <person name="Steward C.A."/>
            <person name="Swarbreck D."/>
            <person name="Sycamore N."/>
            <person name="Tester J."/>
            <person name="Thorpe A."/>
            <person name="Tracey A."/>
            <person name="Tromans A."/>
            <person name="Thomas D.W."/>
            <person name="Wall M."/>
            <person name="Wallis J.M."/>
            <person name="West A.P."/>
            <person name="Whitehead S.L."/>
            <person name="Willey D.L."/>
            <person name="Williams S.A."/>
            <person name="Wilming L."/>
            <person name="Wray P.W."/>
            <person name="Young L."/>
            <person name="Ashurst J.L."/>
            <person name="Coulson A."/>
            <person name="Blocker H."/>
            <person name="Durbin R.M."/>
            <person name="Sulston J.E."/>
            <person name="Hubbard T."/>
            <person name="Jackson M.J."/>
            <person name="Bentley D.R."/>
            <person name="Beck S."/>
            <person name="Rogers J."/>
            <person name="Dunham I."/>
        </authorList>
    </citation>
    <scope>NUCLEOTIDE SEQUENCE [LARGE SCALE GENOMIC DNA]</scope>
</reference>
<reference key="3">
    <citation type="journal article" date="2004" name="Genome Res.">
        <title>The status, quality, and expansion of the NIH full-length cDNA project: the Mammalian Gene Collection (MGC).</title>
        <authorList>
            <consortium name="The MGC Project Team"/>
        </authorList>
    </citation>
    <scope>NUCLEOTIDE SEQUENCE [LARGE SCALE MRNA]</scope>
    <source>
        <tissue>Brain</tissue>
    </source>
</reference>
<keyword id="KW-1185">Reference proteome</keyword>
<comment type="interaction">
    <interactant intactId="EBI-10173129">
        <id>Q8NAJ2</id>
    </interactant>
    <interactant intactId="EBI-742764">
        <id>O76083</id>
        <label>PDE9A</label>
    </interactant>
    <organismsDiffer>false</organismsDiffer>
    <experiments>3</experiments>
</comment>
<comment type="interaction">
    <interactant intactId="EBI-10173129">
        <id>Q8NAJ2</id>
    </interactant>
    <interactant intactId="EBI-348380">
        <id>P25788</id>
        <label>PSMA3</label>
    </interactant>
    <organismsDiffer>false</organismsDiffer>
    <experiments>3</experiments>
</comment>
<comment type="interaction">
    <interactant intactId="EBI-10173129">
        <id>Q8NAJ2</id>
    </interactant>
    <interactant intactId="EBI-3921395">
        <id>Q9BT73</id>
        <label>PSMG3</label>
    </interactant>
    <organismsDiffer>false</organismsDiffer>
    <experiments>2</experiments>
</comment>
<comment type="caution">
    <text evidence="1">Product of a dubious gene prediction. May be a non-coding RNA.</text>
</comment>
<sequence>MAYVALSDKPHLSGEVGEEACSSWNPPLFSPRPLPRLWPLPGTPFLPIRALPFSASSSGKSSLVPSPSSSAHSGFRTPCLGPDCLLCTQGCELHEGRNHMAVHSCVARAWPGDPQEVRHLNPLLCDPGSQVEPSWPWHPGLEQAAASWVGNHVSPAHRQALRGHSLGSALRALMPGGHCPLCVPCKRGCNLRGGRGKHGPRPCCPLLRKFPVLPVHPWPFPCAVWDSGWSCR</sequence>
<proteinExistence type="uncertain"/>
<feature type="chain" id="PRO_0000228103" description="Putative uncharacterized protein encoded by LINC02913">
    <location>
        <begin position="1"/>
        <end position="232"/>
    </location>
</feature>
<feature type="sequence conflict" description="In Ref. 1; BAC03921 and 3; AAI32700/AAI32702." ref="1 3">
    <original>G</original>
    <variation>R</variation>
    <location>
        <position position="177"/>
    </location>
</feature>
<feature type="sequence conflict" description="In Ref. 1; BAC03921." ref="1">
    <original>N</original>
    <variation>D</variation>
    <location>
        <position position="190"/>
    </location>
</feature>
<dbReference type="EMBL" id="AK092588">
    <property type="protein sequence ID" value="BAC03921.1"/>
    <property type="molecule type" value="mRNA"/>
</dbReference>
<dbReference type="EMBL" id="AL161785">
    <property type="status" value="NOT_ANNOTATED_CDS"/>
    <property type="molecule type" value="Genomic_DNA"/>
</dbReference>
<dbReference type="EMBL" id="BC132699">
    <property type="protein sequence ID" value="AAI32700.1"/>
    <property type="molecule type" value="mRNA"/>
</dbReference>
<dbReference type="EMBL" id="BC132701">
    <property type="protein sequence ID" value="AAI32702.1"/>
    <property type="molecule type" value="mRNA"/>
</dbReference>
<dbReference type="RefSeq" id="NP_001012733.2">
    <property type="nucleotide sequence ID" value="NM_001012715.3"/>
</dbReference>
<dbReference type="BioGRID" id="136057">
    <property type="interactions" value="5"/>
</dbReference>
<dbReference type="IntAct" id="Q8NAJ2">
    <property type="interactions" value="3"/>
</dbReference>
<dbReference type="GlyGen" id="Q8NAJ2">
    <property type="glycosylation" value="1 site, 1 O-linked glycan (1 site)"/>
</dbReference>
<dbReference type="BioMuta" id="HGNC:31370"/>
<dbReference type="DNASU" id="414318"/>
<dbReference type="AGR" id="HGNC:31370"/>
<dbReference type="GeneCards" id="LINC02913"/>
<dbReference type="HGNC" id="HGNC:31370">
    <property type="gene designation" value="LINC02913"/>
</dbReference>
<dbReference type="neXtProt" id="NX_Q8NAJ2"/>
<dbReference type="InParanoid" id="Q8NAJ2"/>
<dbReference type="PAN-GO" id="Q8NAJ2">
    <property type="GO annotations" value="0 GO annotations based on evolutionary models"/>
</dbReference>
<dbReference type="PathwayCommons" id="Q8NAJ2"/>
<dbReference type="SignaLink" id="Q8NAJ2"/>
<dbReference type="BioGRID-ORCS" id="414318">
    <property type="hits" value="1 hit in 166 CRISPR screens"/>
</dbReference>
<dbReference type="GenomeRNAi" id="414318"/>
<dbReference type="Pharos" id="Q8NAJ2">
    <property type="development level" value="Tdark"/>
</dbReference>
<dbReference type="Proteomes" id="UP000005640">
    <property type="component" value="Unplaced"/>
</dbReference>
<dbReference type="RNAct" id="Q8NAJ2">
    <property type="molecule type" value="protein"/>
</dbReference>